<evidence type="ECO:0000250" key="1"/>
<evidence type="ECO:0000305" key="2"/>
<proteinExistence type="evidence at transcript level"/>
<reference key="1">
    <citation type="submission" date="2006-11" db="EMBL/GenBank/DDBJ databases">
        <authorList>
            <consortium name="NIH - Xenopus Gene Collection (XGC) project"/>
        </authorList>
    </citation>
    <scope>NUCLEOTIDE SEQUENCE [LARGE SCALE MRNA]</scope>
    <source>
        <tissue>Liver</tissue>
    </source>
</reference>
<dbReference type="EMBL" id="BC127374">
    <property type="protein sequence ID" value="AAI27375.1"/>
    <property type="molecule type" value="mRNA"/>
</dbReference>
<dbReference type="RefSeq" id="NP_001090691.1">
    <property type="nucleotide sequence ID" value="NM_001097222.2"/>
</dbReference>
<dbReference type="SMR" id="A0JPD7"/>
<dbReference type="FunCoup" id="A0JPD7">
    <property type="interactions" value="1009"/>
</dbReference>
<dbReference type="STRING" id="8364.ENSXETP00000020353"/>
<dbReference type="PaxDb" id="8364-ENSXETP00000007618"/>
<dbReference type="GeneID" id="100036669"/>
<dbReference type="KEGG" id="xtr:100036669"/>
<dbReference type="AGR" id="Xenbase:XB-GENE-962667"/>
<dbReference type="CTD" id="84293"/>
<dbReference type="Xenbase" id="XB-GENE-962667">
    <property type="gene designation" value="prxl2a"/>
</dbReference>
<dbReference type="eggNOG" id="KOG4498">
    <property type="taxonomic scope" value="Eukaryota"/>
</dbReference>
<dbReference type="HOGENOM" id="CLU_086062_0_0_1"/>
<dbReference type="InParanoid" id="A0JPD7"/>
<dbReference type="OMA" id="SMGMWSL"/>
<dbReference type="OrthoDB" id="40334at2759"/>
<dbReference type="PhylomeDB" id="A0JPD7"/>
<dbReference type="TreeFam" id="TF313804"/>
<dbReference type="Proteomes" id="UP000008143">
    <property type="component" value="Chromosome 7"/>
</dbReference>
<dbReference type="Bgee" id="ENSXETG00000003529">
    <property type="expression patterns" value="Expressed in testis and 13 other cell types or tissues"/>
</dbReference>
<dbReference type="ExpressionAtlas" id="A0JPD7">
    <property type="expression patterns" value="baseline"/>
</dbReference>
<dbReference type="GO" id="GO:0005737">
    <property type="term" value="C:cytoplasm"/>
    <property type="evidence" value="ECO:0007669"/>
    <property type="project" value="UniProtKB-SubCell"/>
</dbReference>
<dbReference type="GO" id="GO:0016209">
    <property type="term" value="F:antioxidant activity"/>
    <property type="evidence" value="ECO:0007669"/>
    <property type="project" value="UniProtKB-KW"/>
</dbReference>
<dbReference type="CDD" id="cd02970">
    <property type="entry name" value="PRX_like2"/>
    <property type="match status" value="1"/>
</dbReference>
<dbReference type="FunFam" id="3.40.30.10:FF:000312">
    <property type="entry name" value="redox-regulatory protein FAM213A isoform X1"/>
    <property type="match status" value="1"/>
</dbReference>
<dbReference type="Gene3D" id="3.40.30.10">
    <property type="entry name" value="Glutaredoxin"/>
    <property type="match status" value="1"/>
</dbReference>
<dbReference type="InterPro" id="IPR032801">
    <property type="entry name" value="PXL2A/B/C"/>
</dbReference>
<dbReference type="InterPro" id="IPR036249">
    <property type="entry name" value="Thioredoxin-like_sf"/>
</dbReference>
<dbReference type="PANTHER" id="PTHR28630">
    <property type="match status" value="1"/>
</dbReference>
<dbReference type="PANTHER" id="PTHR28630:SF31">
    <property type="entry name" value="PEROXIREDOXIN-LIKE 2A"/>
    <property type="match status" value="1"/>
</dbReference>
<dbReference type="Pfam" id="PF13911">
    <property type="entry name" value="AhpC-TSA_2"/>
    <property type="match status" value="1"/>
</dbReference>
<dbReference type="SUPFAM" id="SSF52833">
    <property type="entry name" value="Thioredoxin-like"/>
    <property type="match status" value="1"/>
</dbReference>
<organism>
    <name type="scientific">Xenopus tropicalis</name>
    <name type="common">Western clawed frog</name>
    <name type="synonym">Silurana tropicalis</name>
    <dbReference type="NCBI Taxonomy" id="8364"/>
    <lineage>
        <taxon>Eukaryota</taxon>
        <taxon>Metazoa</taxon>
        <taxon>Chordata</taxon>
        <taxon>Craniata</taxon>
        <taxon>Vertebrata</taxon>
        <taxon>Euteleostomi</taxon>
        <taxon>Amphibia</taxon>
        <taxon>Batrachia</taxon>
        <taxon>Anura</taxon>
        <taxon>Pipoidea</taxon>
        <taxon>Pipidae</taxon>
        <taxon>Xenopodinae</taxon>
        <taxon>Xenopus</taxon>
        <taxon>Silurana</taxon>
    </lineage>
</organism>
<accession>A0JPD7</accession>
<name>PXL2A_XENTR</name>
<comment type="function">
    <text evidence="1">Involved in redox regulation of the cell. Acts as an antioxidant (By similarity).</text>
</comment>
<comment type="subcellular location">
    <subcellularLocation>
        <location evidence="1">Cytoplasm</location>
    </subcellularLocation>
</comment>
<comment type="similarity">
    <text evidence="2">Belongs to the peroxiredoxin-like PRXL2 family. PRXL2A subfamily.</text>
</comment>
<feature type="chain" id="PRO_0000398785" description="Peroxiredoxin-like 2A">
    <location>
        <begin position="1"/>
        <end position="227"/>
    </location>
</feature>
<feature type="region of interest" description="Thioredoxin fold" evidence="1">
    <location>
        <begin position="13"/>
        <end position="111"/>
    </location>
</feature>
<feature type="active site" description="Redox-active" evidence="1">
    <location>
        <position position="84"/>
    </location>
</feature>
<feature type="active site" description="Redox-active" evidence="1">
    <location>
        <position position="87"/>
    </location>
</feature>
<protein>
    <recommendedName>
        <fullName>Peroxiredoxin-like 2A</fullName>
    </recommendedName>
    <alternativeName>
        <fullName>Peroxiredoxin-like 2 activated in M-CSF stimulated monocytes</fullName>
        <shortName>Protein PAMM</shortName>
    </alternativeName>
    <alternativeName>
        <fullName>Redox-regulatory protein FAM213A</fullName>
    </alternativeName>
</protein>
<keyword id="KW-0049">Antioxidant</keyword>
<keyword id="KW-0963">Cytoplasm</keyword>
<keyword id="KW-0676">Redox-active center</keyword>
<keyword id="KW-1185">Reference proteome</keyword>
<sequence>MFDLSDQLIAMGLWSISIGAFGAAVAGILLANTDLFLTQTEEATLDYLEETELKAIGDEPKSFKAKDLWEKNGAVVMAVRRPGCFLCREEASDLSSLKSQLDQLGVPLYAVVKENIGNEVEQFQPYFNGKIFLDEKGKFYGPQKRKMMFLGLVRLGVWQNFRRAWKGGFEGNLEGEGLILGGMFVIGSGKQGILLEHREKEFGDKANLTAVLDAARKINKQRAQNDN</sequence>
<gene>
    <name type="primary">prxl2a</name>
    <name type="synonym">fam213a</name>
    <name type="synonym">pamm</name>
</gene>